<sequence length="284" mass="30980">MYVVSTKQMLNNAQRGGYAVPAFNIHNLETMQVVVETAASMHAPVIIAGTPGTFTHAGTENLMALVSAMAKQYHHPLVIHLDHHTKFDDIAQKVRSGVRSVMIDASHLPFAQNISRVKEVVDFCHRFDVSVEAELGQLGGQEDDVQVNEADAFYTNPVQAREFAEATGIDSLAVAIGTAHGMYARAPALDFSRLENIRQWVNLPLVLHGASGLSTKDIQQTIKLGICKINVATELKNAFSQALKNYLTEHPEATDPRDYLQSAKSAMRDVVSKVIADCGCEGRA</sequence>
<feature type="chain" id="PRO_0000355338" description="D-tagatose-1,6-bisphosphate aldolase subunit GatY">
    <location>
        <begin position="1"/>
        <end position="284"/>
    </location>
</feature>
<feature type="active site" description="Proton donor" evidence="1">
    <location>
        <position position="82"/>
    </location>
</feature>
<feature type="binding site" evidence="1">
    <location>
        <position position="83"/>
    </location>
    <ligand>
        <name>Zn(2+)</name>
        <dbReference type="ChEBI" id="CHEBI:29105"/>
        <note>catalytic</note>
    </ligand>
</feature>
<feature type="binding site" evidence="1">
    <location>
        <position position="180"/>
    </location>
    <ligand>
        <name>Zn(2+)</name>
        <dbReference type="ChEBI" id="CHEBI:29105"/>
        <note>catalytic</note>
    </ligand>
</feature>
<feature type="binding site" evidence="1">
    <location>
        <position position="181"/>
    </location>
    <ligand>
        <name>dihydroxyacetone phosphate</name>
        <dbReference type="ChEBI" id="CHEBI:57642"/>
    </ligand>
</feature>
<feature type="binding site" evidence="1">
    <location>
        <position position="208"/>
    </location>
    <ligand>
        <name>Zn(2+)</name>
        <dbReference type="ChEBI" id="CHEBI:29105"/>
        <note>catalytic</note>
    </ligand>
</feature>
<feature type="binding site" evidence="1">
    <location>
        <begin position="209"/>
        <end position="211"/>
    </location>
    <ligand>
        <name>dihydroxyacetone phosphate</name>
        <dbReference type="ChEBI" id="CHEBI:57642"/>
    </ligand>
</feature>
<feature type="binding site" evidence="1">
    <location>
        <begin position="230"/>
        <end position="233"/>
    </location>
    <ligand>
        <name>dihydroxyacetone phosphate</name>
        <dbReference type="ChEBI" id="CHEBI:57642"/>
    </ligand>
</feature>
<gene>
    <name evidence="1" type="primary">gatY</name>
    <name type="ordered locus">c2621</name>
</gene>
<evidence type="ECO:0000255" key="1">
    <source>
        <dbReference type="HAMAP-Rule" id="MF_01294"/>
    </source>
</evidence>
<evidence type="ECO:0000305" key="2"/>
<dbReference type="EC" id="4.1.2.40" evidence="1"/>
<dbReference type="EMBL" id="AE014075">
    <property type="protein sequence ID" value="AAN81077.1"/>
    <property type="status" value="ALT_INIT"/>
    <property type="molecule type" value="Genomic_DNA"/>
</dbReference>
<dbReference type="RefSeq" id="WP_000289805.1">
    <property type="nucleotide sequence ID" value="NZ_CP051263.1"/>
</dbReference>
<dbReference type="SMR" id="Q8FFY7"/>
<dbReference type="STRING" id="199310.c2621"/>
<dbReference type="KEGG" id="ecc:c2621"/>
<dbReference type="eggNOG" id="COG0191">
    <property type="taxonomic scope" value="Bacteria"/>
</dbReference>
<dbReference type="HOGENOM" id="CLU_040088_0_1_6"/>
<dbReference type="UniPathway" id="UPA00704">
    <property type="reaction ID" value="UER00716"/>
</dbReference>
<dbReference type="Proteomes" id="UP000001410">
    <property type="component" value="Chromosome"/>
</dbReference>
<dbReference type="GO" id="GO:0005829">
    <property type="term" value="C:cytosol"/>
    <property type="evidence" value="ECO:0007669"/>
    <property type="project" value="TreeGrafter"/>
</dbReference>
<dbReference type="GO" id="GO:0009025">
    <property type="term" value="F:tagatose-bisphosphate aldolase activity"/>
    <property type="evidence" value="ECO:0007669"/>
    <property type="project" value="UniProtKB-UniRule"/>
</dbReference>
<dbReference type="GO" id="GO:0008270">
    <property type="term" value="F:zinc ion binding"/>
    <property type="evidence" value="ECO:0007669"/>
    <property type="project" value="UniProtKB-UniRule"/>
</dbReference>
<dbReference type="GO" id="GO:2001059">
    <property type="term" value="P:D-tagatose 6-phosphate catabolic process"/>
    <property type="evidence" value="ECO:0007669"/>
    <property type="project" value="UniProtKB-UniRule"/>
</dbReference>
<dbReference type="GO" id="GO:0019404">
    <property type="term" value="P:galactitol catabolic process"/>
    <property type="evidence" value="ECO:0007669"/>
    <property type="project" value="InterPro"/>
</dbReference>
<dbReference type="CDD" id="cd00947">
    <property type="entry name" value="TBP_aldolase_IIB"/>
    <property type="match status" value="1"/>
</dbReference>
<dbReference type="FunFam" id="3.20.20.70:FF:000043">
    <property type="entry name" value="D-tagatose-1,6-bisphosphate aldolase subunit GatY"/>
    <property type="match status" value="1"/>
</dbReference>
<dbReference type="Gene3D" id="3.20.20.70">
    <property type="entry name" value="Aldolase class I"/>
    <property type="match status" value="1"/>
</dbReference>
<dbReference type="HAMAP" id="MF_01294">
    <property type="entry name" value="TagBP_aldolase_GatY"/>
    <property type="match status" value="1"/>
</dbReference>
<dbReference type="InterPro" id="IPR013785">
    <property type="entry name" value="Aldolase_TIM"/>
</dbReference>
<dbReference type="InterPro" id="IPR050246">
    <property type="entry name" value="Class_II_FBP_aldolase"/>
</dbReference>
<dbReference type="InterPro" id="IPR000771">
    <property type="entry name" value="FBA_II"/>
</dbReference>
<dbReference type="InterPro" id="IPR011288">
    <property type="entry name" value="TagBP_ald_KbaY/GatY"/>
</dbReference>
<dbReference type="InterPro" id="IPR023955">
    <property type="entry name" value="TagBP_aldolase_GatY"/>
</dbReference>
<dbReference type="NCBIfam" id="TIGR00167">
    <property type="entry name" value="cbbA"/>
    <property type="match status" value="1"/>
</dbReference>
<dbReference type="NCBIfam" id="NF006626">
    <property type="entry name" value="PRK09195.1"/>
    <property type="match status" value="1"/>
</dbReference>
<dbReference type="NCBIfam" id="NF009374">
    <property type="entry name" value="PRK12737.1"/>
    <property type="match status" value="1"/>
</dbReference>
<dbReference type="NCBIfam" id="TIGR01858">
    <property type="entry name" value="tag_bisphos_ald"/>
    <property type="match status" value="1"/>
</dbReference>
<dbReference type="PANTHER" id="PTHR30304">
    <property type="entry name" value="D-TAGATOSE-1,6-BISPHOSPHATE ALDOLASE"/>
    <property type="match status" value="1"/>
</dbReference>
<dbReference type="PANTHER" id="PTHR30304:SF0">
    <property type="entry name" value="D-TAGATOSE-1,6-BISPHOSPHATE ALDOLASE SUBUNIT GATY-RELATED"/>
    <property type="match status" value="1"/>
</dbReference>
<dbReference type="Pfam" id="PF01116">
    <property type="entry name" value="F_bP_aldolase"/>
    <property type="match status" value="1"/>
</dbReference>
<dbReference type="PIRSF" id="PIRSF001359">
    <property type="entry name" value="F_bP_aldolase_II"/>
    <property type="match status" value="1"/>
</dbReference>
<dbReference type="SUPFAM" id="SSF51569">
    <property type="entry name" value="Aldolase"/>
    <property type="match status" value="1"/>
</dbReference>
<dbReference type="PROSITE" id="PS00602">
    <property type="entry name" value="ALDOLASE_CLASS_II_1"/>
    <property type="match status" value="1"/>
</dbReference>
<dbReference type="PROSITE" id="PS00806">
    <property type="entry name" value="ALDOLASE_CLASS_II_2"/>
    <property type="match status" value="1"/>
</dbReference>
<name>GATY_ECOL6</name>
<organism>
    <name type="scientific">Escherichia coli O6:H1 (strain CFT073 / ATCC 700928 / UPEC)</name>
    <dbReference type="NCBI Taxonomy" id="199310"/>
    <lineage>
        <taxon>Bacteria</taxon>
        <taxon>Pseudomonadati</taxon>
        <taxon>Pseudomonadota</taxon>
        <taxon>Gammaproteobacteria</taxon>
        <taxon>Enterobacterales</taxon>
        <taxon>Enterobacteriaceae</taxon>
        <taxon>Escherichia</taxon>
    </lineage>
</organism>
<proteinExistence type="inferred from homology"/>
<protein>
    <recommendedName>
        <fullName evidence="1">D-tagatose-1,6-bisphosphate aldolase subunit GatY</fullName>
        <shortName evidence="1">TBPA</shortName>
        <shortName evidence="1">TagBP aldolase</shortName>
        <ecNumber evidence="1">4.1.2.40</ecNumber>
    </recommendedName>
    <alternativeName>
        <fullName evidence="1">D-tagatose-bisphosphate aldolase class II</fullName>
    </alternativeName>
    <alternativeName>
        <fullName evidence="1">Tagatose-bisphosphate aldolase</fullName>
    </alternativeName>
</protein>
<accession>Q8FFY7</accession>
<keyword id="KW-0298">Galactitol metabolism</keyword>
<keyword id="KW-0456">Lyase</keyword>
<keyword id="KW-0479">Metal-binding</keyword>
<keyword id="KW-1185">Reference proteome</keyword>
<keyword id="KW-0862">Zinc</keyword>
<reference key="1">
    <citation type="journal article" date="2002" name="Proc. Natl. Acad. Sci. U.S.A.">
        <title>Extensive mosaic structure revealed by the complete genome sequence of uropathogenic Escherichia coli.</title>
        <authorList>
            <person name="Welch R.A."/>
            <person name="Burland V."/>
            <person name="Plunkett G. III"/>
            <person name="Redford P."/>
            <person name="Roesch P."/>
            <person name="Rasko D."/>
            <person name="Buckles E.L."/>
            <person name="Liou S.-R."/>
            <person name="Boutin A."/>
            <person name="Hackett J."/>
            <person name="Stroud D."/>
            <person name="Mayhew G.F."/>
            <person name="Rose D.J."/>
            <person name="Zhou S."/>
            <person name="Schwartz D.C."/>
            <person name="Perna N.T."/>
            <person name="Mobley H.L.T."/>
            <person name="Donnenberg M.S."/>
            <person name="Blattner F.R."/>
        </authorList>
    </citation>
    <scope>NUCLEOTIDE SEQUENCE [LARGE SCALE GENOMIC DNA]</scope>
    <source>
        <strain>CFT073 / ATCC 700928 / UPEC</strain>
    </source>
</reference>
<comment type="function">
    <text evidence="1">Catalytic subunit of the tagatose-1,6-bisphosphate aldolase GatYZ, which catalyzes the reversible aldol condensation of dihydroxyacetone phosphate (DHAP or glycerone-phosphate) with glyceraldehyde 3-phosphate (G3P) to produce tagatose 1,6-bisphosphate (TBP). Requires GatZ subunit for full activity and stability. Is involved in the catabolism of galactitol.</text>
</comment>
<comment type="catalytic activity">
    <reaction evidence="1">
        <text>D-tagatofuranose 1,6-bisphosphate = D-glyceraldehyde 3-phosphate + dihydroxyacetone phosphate</text>
        <dbReference type="Rhea" id="RHEA:22948"/>
        <dbReference type="ChEBI" id="CHEBI:57642"/>
        <dbReference type="ChEBI" id="CHEBI:58694"/>
        <dbReference type="ChEBI" id="CHEBI:59776"/>
        <dbReference type="EC" id="4.1.2.40"/>
    </reaction>
</comment>
<comment type="cofactor">
    <cofactor evidence="1">
        <name>Zn(2+)</name>
        <dbReference type="ChEBI" id="CHEBI:29105"/>
    </cofactor>
    <text evidence="1">Binds 1 zinc ion per subunit.</text>
</comment>
<comment type="pathway">
    <text evidence="1">Carbohydrate metabolism; D-tagatose 6-phosphate degradation; D-glyceraldehyde 3-phosphate and glycerone phosphate from D-tagatose 6-phosphate: step 2/2.</text>
</comment>
<comment type="subunit">
    <text evidence="1">Forms a complex with GatZ.</text>
</comment>
<comment type="similarity">
    <text evidence="1">Belongs to the class II fructose-bisphosphate aldolase family. TagBP aldolase GatY subfamily.</text>
</comment>
<comment type="sequence caution" evidence="2">
    <conflict type="erroneous initiation">
        <sequence resource="EMBL-CDS" id="AAN81077"/>
    </conflict>
</comment>